<feature type="chain" id="PRO_0000207189" description="RNA polymerase-associated protein RapA">
    <location>
        <begin position="1"/>
        <end position="969"/>
    </location>
</feature>
<feature type="domain" description="Helicase ATP-binding" evidence="1">
    <location>
        <begin position="164"/>
        <end position="334"/>
    </location>
</feature>
<feature type="domain" description="Helicase C-terminal" evidence="1">
    <location>
        <begin position="492"/>
        <end position="686"/>
    </location>
</feature>
<feature type="short sequence motif" description="DEAH box">
    <location>
        <begin position="280"/>
        <end position="283"/>
    </location>
</feature>
<feature type="binding site" evidence="1">
    <location>
        <begin position="177"/>
        <end position="184"/>
    </location>
    <ligand>
        <name>ATP</name>
        <dbReference type="ChEBI" id="CHEBI:30616"/>
    </ligand>
</feature>
<reference key="1">
    <citation type="journal article" date="2003" name="Lancet">
        <title>Genome sequence of Vibrio parahaemolyticus: a pathogenic mechanism distinct from that of V. cholerae.</title>
        <authorList>
            <person name="Makino K."/>
            <person name="Oshima K."/>
            <person name="Kurokawa K."/>
            <person name="Yokoyama K."/>
            <person name="Uda T."/>
            <person name="Tagomori K."/>
            <person name="Iijima Y."/>
            <person name="Najima M."/>
            <person name="Nakano M."/>
            <person name="Yamashita A."/>
            <person name="Kubota Y."/>
            <person name="Kimura S."/>
            <person name="Yasunaga T."/>
            <person name="Honda T."/>
            <person name="Shinagawa H."/>
            <person name="Hattori M."/>
            <person name="Iida T."/>
        </authorList>
    </citation>
    <scope>NUCLEOTIDE SEQUENCE [LARGE SCALE GENOMIC DNA]</scope>
    <source>
        <strain>RIMD 2210633</strain>
    </source>
</reference>
<dbReference type="EC" id="3.6.4.-" evidence="1"/>
<dbReference type="EMBL" id="BA000031">
    <property type="protein sequence ID" value="BAC60945.1"/>
    <property type="molecule type" value="Genomic_DNA"/>
</dbReference>
<dbReference type="RefSeq" id="NP_799061.1">
    <property type="nucleotide sequence ID" value="NC_004603.1"/>
</dbReference>
<dbReference type="RefSeq" id="WP_005461840.1">
    <property type="nucleotide sequence ID" value="NC_004603.1"/>
</dbReference>
<dbReference type="SMR" id="Q87LD0"/>
<dbReference type="GeneID" id="1190227"/>
<dbReference type="KEGG" id="vpa:VP2682"/>
<dbReference type="PATRIC" id="fig|223926.6.peg.2576"/>
<dbReference type="eggNOG" id="COG0553">
    <property type="taxonomic scope" value="Bacteria"/>
</dbReference>
<dbReference type="HOGENOM" id="CLU_011520_0_0_6"/>
<dbReference type="Proteomes" id="UP000002493">
    <property type="component" value="Chromosome 1"/>
</dbReference>
<dbReference type="GO" id="GO:0005524">
    <property type="term" value="F:ATP binding"/>
    <property type="evidence" value="ECO:0007669"/>
    <property type="project" value="UniProtKB-UniRule"/>
</dbReference>
<dbReference type="GO" id="GO:0003677">
    <property type="term" value="F:DNA binding"/>
    <property type="evidence" value="ECO:0007669"/>
    <property type="project" value="UniProtKB-KW"/>
</dbReference>
<dbReference type="GO" id="GO:0004386">
    <property type="term" value="F:helicase activity"/>
    <property type="evidence" value="ECO:0007669"/>
    <property type="project" value="UniProtKB-UniRule"/>
</dbReference>
<dbReference type="GO" id="GO:0016817">
    <property type="term" value="F:hydrolase activity, acting on acid anhydrides"/>
    <property type="evidence" value="ECO:0007669"/>
    <property type="project" value="InterPro"/>
</dbReference>
<dbReference type="GO" id="GO:0006355">
    <property type="term" value="P:regulation of DNA-templated transcription"/>
    <property type="evidence" value="ECO:0007669"/>
    <property type="project" value="UniProtKB-UniRule"/>
</dbReference>
<dbReference type="CDD" id="cd18011">
    <property type="entry name" value="DEXDc_RapA"/>
    <property type="match status" value="1"/>
</dbReference>
<dbReference type="CDD" id="cd18793">
    <property type="entry name" value="SF2_C_SNF"/>
    <property type="match status" value="1"/>
</dbReference>
<dbReference type="FunFam" id="3.40.50.10810:FF:000012">
    <property type="entry name" value="RNA polymerase-associated protein RapA"/>
    <property type="match status" value="1"/>
</dbReference>
<dbReference type="Gene3D" id="2.30.30.140">
    <property type="match status" value="1"/>
</dbReference>
<dbReference type="Gene3D" id="2.30.30.930">
    <property type="match status" value="1"/>
</dbReference>
<dbReference type="Gene3D" id="3.30.360.80">
    <property type="match status" value="1"/>
</dbReference>
<dbReference type="Gene3D" id="6.10.140.1500">
    <property type="match status" value="1"/>
</dbReference>
<dbReference type="Gene3D" id="6.10.140.2230">
    <property type="match status" value="1"/>
</dbReference>
<dbReference type="Gene3D" id="3.40.50.300">
    <property type="entry name" value="P-loop containing nucleotide triphosphate hydrolases"/>
    <property type="match status" value="1"/>
</dbReference>
<dbReference type="Gene3D" id="3.40.50.10810">
    <property type="entry name" value="Tandem AAA-ATPase domain"/>
    <property type="match status" value="1"/>
</dbReference>
<dbReference type="HAMAP" id="MF_01821">
    <property type="entry name" value="Helicase_RapA"/>
    <property type="match status" value="1"/>
</dbReference>
<dbReference type="InterPro" id="IPR014001">
    <property type="entry name" value="Helicase_ATP-bd"/>
</dbReference>
<dbReference type="InterPro" id="IPR001650">
    <property type="entry name" value="Helicase_C-like"/>
</dbReference>
<dbReference type="InterPro" id="IPR023949">
    <property type="entry name" value="Helicase_RapA"/>
</dbReference>
<dbReference type="InterPro" id="IPR027417">
    <property type="entry name" value="P-loop_NTPase"/>
</dbReference>
<dbReference type="InterPro" id="IPR022737">
    <property type="entry name" value="RapA_C"/>
</dbReference>
<dbReference type="InterPro" id="IPR038718">
    <property type="entry name" value="SNF2-like_sf"/>
</dbReference>
<dbReference type="InterPro" id="IPR049730">
    <property type="entry name" value="SNF2/RAD54-like_C"/>
</dbReference>
<dbReference type="InterPro" id="IPR000330">
    <property type="entry name" value="SNF2_N"/>
</dbReference>
<dbReference type="InterPro" id="IPR040765">
    <property type="entry name" value="Tudor_1_RapA"/>
</dbReference>
<dbReference type="InterPro" id="IPR040766">
    <property type="entry name" value="Tudor_2_RapA"/>
</dbReference>
<dbReference type="NCBIfam" id="NF003426">
    <property type="entry name" value="PRK04914.1"/>
    <property type="match status" value="1"/>
</dbReference>
<dbReference type="PANTHER" id="PTHR45766">
    <property type="entry name" value="DNA ANNEALING HELICASE AND ENDONUCLEASE ZRANB3 FAMILY MEMBER"/>
    <property type="match status" value="1"/>
</dbReference>
<dbReference type="PANTHER" id="PTHR45766:SF6">
    <property type="entry name" value="SWI_SNF-RELATED MATRIX-ASSOCIATED ACTIN-DEPENDENT REGULATOR OF CHROMATIN SUBFAMILY A-LIKE PROTEIN 1"/>
    <property type="match status" value="1"/>
</dbReference>
<dbReference type="Pfam" id="PF00271">
    <property type="entry name" value="Helicase_C"/>
    <property type="match status" value="1"/>
</dbReference>
<dbReference type="Pfam" id="PF12137">
    <property type="entry name" value="RapA_C"/>
    <property type="match status" value="1"/>
</dbReference>
<dbReference type="Pfam" id="PF00176">
    <property type="entry name" value="SNF2-rel_dom"/>
    <property type="match status" value="1"/>
</dbReference>
<dbReference type="Pfam" id="PF18339">
    <property type="entry name" value="Tudor_1_RapA"/>
    <property type="match status" value="1"/>
</dbReference>
<dbReference type="Pfam" id="PF18337">
    <property type="entry name" value="Tudor_RapA"/>
    <property type="match status" value="1"/>
</dbReference>
<dbReference type="SMART" id="SM00487">
    <property type="entry name" value="DEXDc"/>
    <property type="match status" value="1"/>
</dbReference>
<dbReference type="SMART" id="SM00490">
    <property type="entry name" value="HELICc"/>
    <property type="match status" value="1"/>
</dbReference>
<dbReference type="SUPFAM" id="SSF52540">
    <property type="entry name" value="P-loop containing nucleoside triphosphate hydrolases"/>
    <property type="match status" value="2"/>
</dbReference>
<dbReference type="PROSITE" id="PS51192">
    <property type="entry name" value="HELICASE_ATP_BIND_1"/>
    <property type="match status" value="1"/>
</dbReference>
<dbReference type="PROSITE" id="PS51194">
    <property type="entry name" value="HELICASE_CTER"/>
    <property type="match status" value="1"/>
</dbReference>
<comment type="function">
    <text evidence="1">Transcription regulator that activates transcription by stimulating RNA polymerase (RNAP) recycling in case of stress conditions such as supercoiled DNA or high salt concentrations. Probably acts by releasing the RNAP, when it is trapped or immobilized on tightly supercoiled DNA. Does not activate transcription on linear DNA. Probably not involved in DNA repair.</text>
</comment>
<comment type="subunit">
    <text evidence="1">Interacts with the RNAP. Has a higher affinity for the core RNAP than for the holoenzyme. Its ATPase activity is stimulated by binding to RNAP.</text>
</comment>
<comment type="similarity">
    <text evidence="1">Belongs to the SNF2/RAD54 helicase family. RapA subfamily.</text>
</comment>
<protein>
    <recommendedName>
        <fullName evidence="1">RNA polymerase-associated protein RapA</fullName>
        <ecNumber evidence="1">3.6.4.-</ecNumber>
    </recommendedName>
    <alternativeName>
        <fullName evidence="1">ATP-dependent helicase HepA</fullName>
    </alternativeName>
</protein>
<proteinExistence type="inferred from homology"/>
<evidence type="ECO:0000255" key="1">
    <source>
        <dbReference type="HAMAP-Rule" id="MF_01821"/>
    </source>
</evidence>
<accession>Q87LD0</accession>
<name>RAPA_VIBPA</name>
<keyword id="KW-0010">Activator</keyword>
<keyword id="KW-0067">ATP-binding</keyword>
<keyword id="KW-0238">DNA-binding</keyword>
<keyword id="KW-0347">Helicase</keyword>
<keyword id="KW-0378">Hydrolase</keyword>
<keyword id="KW-0547">Nucleotide-binding</keyword>
<keyword id="KW-0804">Transcription</keyword>
<keyword id="KW-0805">Transcription regulation</keyword>
<organism>
    <name type="scientific">Vibrio parahaemolyticus serotype O3:K6 (strain RIMD 2210633)</name>
    <dbReference type="NCBI Taxonomy" id="223926"/>
    <lineage>
        <taxon>Bacteria</taxon>
        <taxon>Pseudomonadati</taxon>
        <taxon>Pseudomonadota</taxon>
        <taxon>Gammaproteobacteria</taxon>
        <taxon>Vibrionales</taxon>
        <taxon>Vibrionaceae</taxon>
        <taxon>Vibrio</taxon>
    </lineage>
</organism>
<sequence>MTFALGQRWISDTESDLGLGTVVAMDARTVTLMFAASEENRVYARNDAPVTRVTFNVGDVIDCQEGWSLKVEEVLEDEGLYTYFGTREDTQETAVVLREIFLSNQIRFNKPQDKLYAGQIDRMDNFVLRYRALTNQFEQHKSPMRGLCGMRAGLIPHQLYIAHEVGRRHAPRVLLADEVGLGKTIEAGMIIHQQVLSGRAERILIVVPETLQHQWLVEMMRRFNLHFSIFDEERCIEAFADAENPFDTQQYVLCSLDFLRKSRKRFEQALEGEWDLLVVDEAHHLEWSQDKPSREYQVVEGLAERTPGVLLLTATPEQLGRESHFARLRLLDPDRFYDYEAFVEEEEQYAPVADAITSLFSGEKLPDEAKNQITELLSEQDVEPLFRIIESNSDEEAKASARQELIDNLMDRHGTGRVLFRNTRAAIKGFPTRNVHLMPMDIPQQYTTSMRVAGMIGGKMSSEARAMKNLYPEEIFQEFEGDDASWWQFDSRVNWLLEKVKEKRGEKILVIASRASTALQLEQALREREGIRATVFHEGMSILERDKAAAYFAQEEGGAQVLICSEIGSEGRNFQFANQLVMFDLPFNPDLLEQRIGRLDRIGQNRDIDIHVPYLKGTSQAILARWFDEGLNAFAETCPTGRAVYDKYSDALIEILASGDTSTLDEIIEESAKLNKELKSQLEQGRDRLLEMHSNGGEKAQQIVEKIESTDGDTNLVTFALSLFDTIGLNQDDKGENALVVTPSEHMMVPSYPGLPYEGATITFDRDTALSREDMHFISWEHPMIQGGIDLLMSEGVGTSAVSLLKNKALPVGTILLELIYAVDAQAPKRSGITRFLPKTPIRLMMDSRGNDLSAQVEFEGFNRQLSPVNRHLGSKLVTSVQKDVHRLIEAGDVLVEEKVEAVRKQAQQDMQQSLNTELERLQALKAVNPNIRDEEIEAIEAQIKELTGYINQAQVQLDSLRLIVVSHN</sequence>
<gene>
    <name evidence="1" type="primary">rapA</name>
    <name type="synonym">hepA</name>
    <name type="ordered locus">VP2682</name>
</gene>